<feature type="chain" id="PRO_1000118940" description="Ribonuclease 3">
    <location>
        <begin position="1"/>
        <end position="240"/>
    </location>
</feature>
<feature type="domain" description="RNase III" evidence="1">
    <location>
        <begin position="9"/>
        <end position="141"/>
    </location>
</feature>
<feature type="domain" description="DRBM" evidence="1">
    <location>
        <begin position="168"/>
        <end position="237"/>
    </location>
</feature>
<feature type="active site" evidence="1">
    <location>
        <position position="58"/>
    </location>
</feature>
<feature type="active site" evidence="1">
    <location>
        <position position="130"/>
    </location>
</feature>
<feature type="binding site" evidence="1">
    <location>
        <position position="54"/>
    </location>
    <ligand>
        <name>Mg(2+)</name>
        <dbReference type="ChEBI" id="CHEBI:18420"/>
    </ligand>
</feature>
<feature type="binding site" evidence="1">
    <location>
        <position position="127"/>
    </location>
    <ligand>
        <name>Mg(2+)</name>
        <dbReference type="ChEBI" id="CHEBI:18420"/>
    </ligand>
</feature>
<feature type="binding site" evidence="1">
    <location>
        <position position="130"/>
    </location>
    <ligand>
        <name>Mg(2+)</name>
        <dbReference type="ChEBI" id="CHEBI:18420"/>
    </ligand>
</feature>
<proteinExistence type="inferred from homology"/>
<dbReference type="EC" id="3.1.26.3" evidence="1"/>
<dbReference type="EMBL" id="CP000916">
    <property type="protein sequence ID" value="ACM23641.1"/>
    <property type="molecule type" value="Genomic_DNA"/>
</dbReference>
<dbReference type="RefSeq" id="WP_015919930.1">
    <property type="nucleotide sequence ID" value="NC_011978.1"/>
</dbReference>
<dbReference type="SMR" id="B9K9K8"/>
<dbReference type="STRING" id="309803.CTN_1465"/>
<dbReference type="KEGG" id="tna:CTN_1465"/>
<dbReference type="eggNOG" id="COG0571">
    <property type="taxonomic scope" value="Bacteria"/>
</dbReference>
<dbReference type="HOGENOM" id="CLU_000907_1_3_0"/>
<dbReference type="Proteomes" id="UP000000445">
    <property type="component" value="Chromosome"/>
</dbReference>
<dbReference type="GO" id="GO:0005737">
    <property type="term" value="C:cytoplasm"/>
    <property type="evidence" value="ECO:0007669"/>
    <property type="project" value="UniProtKB-SubCell"/>
</dbReference>
<dbReference type="GO" id="GO:0003725">
    <property type="term" value="F:double-stranded RNA binding"/>
    <property type="evidence" value="ECO:0007669"/>
    <property type="project" value="TreeGrafter"/>
</dbReference>
<dbReference type="GO" id="GO:0046872">
    <property type="term" value="F:metal ion binding"/>
    <property type="evidence" value="ECO:0007669"/>
    <property type="project" value="UniProtKB-KW"/>
</dbReference>
<dbReference type="GO" id="GO:0004525">
    <property type="term" value="F:ribonuclease III activity"/>
    <property type="evidence" value="ECO:0007669"/>
    <property type="project" value="UniProtKB-UniRule"/>
</dbReference>
<dbReference type="GO" id="GO:0019843">
    <property type="term" value="F:rRNA binding"/>
    <property type="evidence" value="ECO:0007669"/>
    <property type="project" value="UniProtKB-KW"/>
</dbReference>
<dbReference type="GO" id="GO:0006397">
    <property type="term" value="P:mRNA processing"/>
    <property type="evidence" value="ECO:0007669"/>
    <property type="project" value="UniProtKB-UniRule"/>
</dbReference>
<dbReference type="GO" id="GO:0010468">
    <property type="term" value="P:regulation of gene expression"/>
    <property type="evidence" value="ECO:0007669"/>
    <property type="project" value="TreeGrafter"/>
</dbReference>
<dbReference type="GO" id="GO:0006364">
    <property type="term" value="P:rRNA processing"/>
    <property type="evidence" value="ECO:0007669"/>
    <property type="project" value="UniProtKB-UniRule"/>
</dbReference>
<dbReference type="GO" id="GO:0008033">
    <property type="term" value="P:tRNA processing"/>
    <property type="evidence" value="ECO:0007669"/>
    <property type="project" value="UniProtKB-KW"/>
</dbReference>
<dbReference type="CDD" id="cd10845">
    <property type="entry name" value="DSRM_RNAse_III_family"/>
    <property type="match status" value="1"/>
</dbReference>
<dbReference type="CDD" id="cd00593">
    <property type="entry name" value="RIBOc"/>
    <property type="match status" value="1"/>
</dbReference>
<dbReference type="FunFam" id="1.10.1520.10:FF:000001">
    <property type="entry name" value="Ribonuclease 3"/>
    <property type="match status" value="1"/>
</dbReference>
<dbReference type="FunFam" id="3.30.160.20:FF:000003">
    <property type="entry name" value="Ribonuclease 3"/>
    <property type="match status" value="1"/>
</dbReference>
<dbReference type="Gene3D" id="3.30.160.20">
    <property type="match status" value="1"/>
</dbReference>
<dbReference type="Gene3D" id="1.10.1520.10">
    <property type="entry name" value="Ribonuclease III domain"/>
    <property type="match status" value="1"/>
</dbReference>
<dbReference type="HAMAP" id="MF_00104">
    <property type="entry name" value="RNase_III"/>
    <property type="match status" value="1"/>
</dbReference>
<dbReference type="InterPro" id="IPR014720">
    <property type="entry name" value="dsRBD_dom"/>
</dbReference>
<dbReference type="InterPro" id="IPR011907">
    <property type="entry name" value="RNase_III"/>
</dbReference>
<dbReference type="InterPro" id="IPR000999">
    <property type="entry name" value="RNase_III_dom"/>
</dbReference>
<dbReference type="InterPro" id="IPR036389">
    <property type="entry name" value="RNase_III_sf"/>
</dbReference>
<dbReference type="NCBIfam" id="TIGR02191">
    <property type="entry name" value="RNaseIII"/>
    <property type="match status" value="1"/>
</dbReference>
<dbReference type="PANTHER" id="PTHR11207:SF0">
    <property type="entry name" value="RIBONUCLEASE 3"/>
    <property type="match status" value="1"/>
</dbReference>
<dbReference type="PANTHER" id="PTHR11207">
    <property type="entry name" value="RIBONUCLEASE III"/>
    <property type="match status" value="1"/>
</dbReference>
<dbReference type="Pfam" id="PF00035">
    <property type="entry name" value="dsrm"/>
    <property type="match status" value="1"/>
</dbReference>
<dbReference type="Pfam" id="PF14622">
    <property type="entry name" value="Ribonucleas_3_3"/>
    <property type="match status" value="1"/>
</dbReference>
<dbReference type="SMART" id="SM00358">
    <property type="entry name" value="DSRM"/>
    <property type="match status" value="1"/>
</dbReference>
<dbReference type="SMART" id="SM00535">
    <property type="entry name" value="RIBOc"/>
    <property type="match status" value="1"/>
</dbReference>
<dbReference type="SUPFAM" id="SSF54768">
    <property type="entry name" value="dsRNA-binding domain-like"/>
    <property type="match status" value="1"/>
</dbReference>
<dbReference type="SUPFAM" id="SSF69065">
    <property type="entry name" value="RNase III domain-like"/>
    <property type="match status" value="1"/>
</dbReference>
<dbReference type="PROSITE" id="PS50137">
    <property type="entry name" value="DS_RBD"/>
    <property type="match status" value="1"/>
</dbReference>
<dbReference type="PROSITE" id="PS00517">
    <property type="entry name" value="RNASE_3_1"/>
    <property type="match status" value="1"/>
</dbReference>
<dbReference type="PROSITE" id="PS50142">
    <property type="entry name" value="RNASE_3_2"/>
    <property type="match status" value="1"/>
</dbReference>
<comment type="function">
    <text evidence="1">Digests double-stranded RNA. Involved in the processing of primary rRNA transcript to yield the immediate precursors to the large and small rRNAs (23S and 16S). Processes some mRNAs, and tRNAs when they are encoded in the rRNA operon. Processes pre-crRNA and tracrRNA of type II CRISPR loci if present in the organism.</text>
</comment>
<comment type="catalytic activity">
    <reaction evidence="1">
        <text>Endonucleolytic cleavage to 5'-phosphomonoester.</text>
        <dbReference type="EC" id="3.1.26.3"/>
    </reaction>
</comment>
<comment type="cofactor">
    <cofactor evidence="1">
        <name>Mg(2+)</name>
        <dbReference type="ChEBI" id="CHEBI:18420"/>
    </cofactor>
</comment>
<comment type="subunit">
    <text evidence="1">Homodimer.</text>
</comment>
<comment type="subcellular location">
    <subcellularLocation>
        <location evidence="1">Cytoplasm</location>
    </subcellularLocation>
</comment>
<comment type="similarity">
    <text evidence="1">Belongs to the ribonuclease III family.</text>
</comment>
<name>RNC_THENN</name>
<evidence type="ECO:0000255" key="1">
    <source>
        <dbReference type="HAMAP-Rule" id="MF_00104"/>
    </source>
</evidence>
<gene>
    <name evidence="1" type="primary">rnc</name>
    <name type="ordered locus">CTN_1465</name>
</gene>
<reference key="1">
    <citation type="submission" date="2007-11" db="EMBL/GenBank/DDBJ databases">
        <title>The genome sequence of the hyperthermophilic bacterium Thermotoga neapolitana.</title>
        <authorList>
            <person name="Lim S.K."/>
            <person name="Kim J.S."/>
            <person name="Cha S.H."/>
            <person name="Park B.C."/>
            <person name="Lee D.S."/>
            <person name="Tae H.S."/>
            <person name="Kim S.-J."/>
            <person name="Kim J.J."/>
            <person name="Park K.J."/>
            <person name="Lee S.Y."/>
        </authorList>
    </citation>
    <scope>NUCLEOTIDE SEQUENCE [LARGE SCALE GENOMIC DNA]</scope>
    <source>
        <strain>ATCC 49049 / DSM 4359 / NBRC 107923 / NS-E</strain>
    </source>
</reference>
<keyword id="KW-0963">Cytoplasm</keyword>
<keyword id="KW-0255">Endonuclease</keyword>
<keyword id="KW-0378">Hydrolase</keyword>
<keyword id="KW-0460">Magnesium</keyword>
<keyword id="KW-0479">Metal-binding</keyword>
<keyword id="KW-0507">mRNA processing</keyword>
<keyword id="KW-0540">Nuclease</keyword>
<keyword id="KW-0694">RNA-binding</keyword>
<keyword id="KW-0698">rRNA processing</keyword>
<keyword id="KW-0699">rRNA-binding</keyword>
<keyword id="KW-0819">tRNA processing</keyword>
<protein>
    <recommendedName>
        <fullName evidence="1">Ribonuclease 3</fullName>
        <ecNumber evidence="1">3.1.26.3</ecNumber>
    </recommendedName>
    <alternativeName>
        <fullName evidence="1">Ribonuclease III</fullName>
        <shortName evidence="1">RNase III</shortName>
    </alternativeName>
</protein>
<sequence>MTESERRTVEELQKRLGVLFNDEELLFRALCHSSYANEQKQAGREDVESNEKLEFLGDAVLELFVCEILYRKYPEAEVGDLARVKSAVASEEVLARVSRRLELGKYLFLGKGEEKTGGRERDSILADAFEALLAALYLDQGYQKIKDLFEDEFESYIEKIMKGEILFDYKTALQEIVQREHKTPPEYVLVRTEKNGSEKLFVVEVRVNDETLAVGRGRTKKEAEKDAARKAYEKLVAEKT</sequence>
<organism>
    <name type="scientific">Thermotoga neapolitana (strain ATCC 49049 / DSM 4359 / NBRC 107923 / NS-E)</name>
    <dbReference type="NCBI Taxonomy" id="309803"/>
    <lineage>
        <taxon>Bacteria</taxon>
        <taxon>Thermotogati</taxon>
        <taxon>Thermotogota</taxon>
        <taxon>Thermotogae</taxon>
        <taxon>Thermotogales</taxon>
        <taxon>Thermotogaceae</taxon>
        <taxon>Thermotoga</taxon>
    </lineage>
</organism>
<accession>B9K9K8</accession>